<gene>
    <name type="primary">manA</name>
    <name type="ORF">DDB_G0292206</name>
</gene>
<comment type="catalytic activity">
    <reaction>
        <text>Hydrolysis of terminal, non-reducing alpha-D-mannose residues in alpha-D-mannosides.</text>
        <dbReference type="EC" id="3.2.1.24"/>
    </reaction>
</comment>
<comment type="cofactor">
    <cofactor evidence="1">
        <name>Zn(2+)</name>
        <dbReference type="ChEBI" id="CHEBI:29105"/>
    </cofactor>
    <text evidence="1">Binds 1 zinc ion per subunit.</text>
</comment>
<comment type="subunit">
    <text>Tetramer of equimolar amounts of 60 and 58 kDa subunits.</text>
</comment>
<comment type="subcellular location">
    <molecule>Alpha-mannosidase 60 kDa subunit</molecule>
    <subcellularLocation>
        <location>Lysosome</location>
    </subcellularLocation>
    <text>A few precursors are secreted. The mature 58 and 60 kDa subunits are lysosomal.</text>
</comment>
<comment type="subcellular location">
    <molecule>Alpha-mannosidase 58 kDa subunit</molecule>
    <subcellularLocation>
        <location>Lysosome</location>
    </subcellularLocation>
</comment>
<comment type="induction">
    <text>Via a protein termed prestarvation factor which is produced and secreted by both growing and developing cells.</text>
</comment>
<comment type="PTM">
    <text>First cleaved into the mature 58 kDa subunit and an intermediate 82 kDa subunit. The latter is then cleaved to its mature 60 kDa subunit form. These events occur in multiple intracellular compartments. The 60 kDa subunit may form one or more intramolecular disulfide bonds.</text>
</comment>
<comment type="similarity">
    <text evidence="3">Belongs to the glycosyl hydrolase 38 family.</text>
</comment>
<comment type="sequence caution" evidence="3">
    <conflict type="frameshift">
        <sequence resource="EMBL-CDS" id="AAA33224"/>
    </conflict>
</comment>
<proteinExistence type="evidence at protein level"/>
<reference key="1">
    <citation type="journal article" date="1992" name="J. Biol. Chem.">
        <title>Molecular cloning and characterization of the structural gene coding for the developmentally regulated lysosomal enzyme, alpha-mannosidase, in Dictyostelium discoideum.</title>
        <authorList>
            <person name="Schatzle J."/>
            <person name="Bush J."/>
            <person name="Cardelli J."/>
        </authorList>
    </citation>
    <scope>NUCLEOTIDE SEQUENCE [GENOMIC DNA]</scope>
    <scope>PROTEIN SEQUENCE OF 41-63 AND 596-612</scope>
</reference>
<reference key="2">
    <citation type="journal article" date="2005" name="Nature">
        <title>The genome of the social amoeba Dictyostelium discoideum.</title>
        <authorList>
            <person name="Eichinger L."/>
            <person name="Pachebat J.A."/>
            <person name="Gloeckner G."/>
            <person name="Rajandream M.A."/>
            <person name="Sucgang R."/>
            <person name="Berriman M."/>
            <person name="Song J."/>
            <person name="Olsen R."/>
            <person name="Szafranski K."/>
            <person name="Xu Q."/>
            <person name="Tunggal B."/>
            <person name="Kummerfeld S."/>
            <person name="Madera M."/>
            <person name="Konfortov B.A."/>
            <person name="Rivero F."/>
            <person name="Bankier A.T."/>
            <person name="Lehmann R."/>
            <person name="Hamlin N."/>
            <person name="Davies R."/>
            <person name="Gaudet P."/>
            <person name="Fey P."/>
            <person name="Pilcher K."/>
            <person name="Chen G."/>
            <person name="Saunders D."/>
            <person name="Sodergren E.J."/>
            <person name="Davis P."/>
            <person name="Kerhornou A."/>
            <person name="Nie X."/>
            <person name="Hall N."/>
            <person name="Anjard C."/>
            <person name="Hemphill L."/>
            <person name="Bason N."/>
            <person name="Farbrother P."/>
            <person name="Desany B."/>
            <person name="Just E."/>
            <person name="Morio T."/>
            <person name="Rost R."/>
            <person name="Churcher C.M."/>
            <person name="Cooper J."/>
            <person name="Haydock S."/>
            <person name="van Driessche N."/>
            <person name="Cronin A."/>
            <person name="Goodhead I."/>
            <person name="Muzny D.M."/>
            <person name="Mourier T."/>
            <person name="Pain A."/>
            <person name="Lu M."/>
            <person name="Harper D."/>
            <person name="Lindsay R."/>
            <person name="Hauser H."/>
            <person name="James K.D."/>
            <person name="Quiles M."/>
            <person name="Madan Babu M."/>
            <person name="Saito T."/>
            <person name="Buchrieser C."/>
            <person name="Wardroper A."/>
            <person name="Felder M."/>
            <person name="Thangavelu M."/>
            <person name="Johnson D."/>
            <person name="Knights A."/>
            <person name="Loulseged H."/>
            <person name="Mungall K.L."/>
            <person name="Oliver K."/>
            <person name="Price C."/>
            <person name="Quail M.A."/>
            <person name="Urushihara H."/>
            <person name="Hernandez J."/>
            <person name="Rabbinowitsch E."/>
            <person name="Steffen D."/>
            <person name="Sanders M."/>
            <person name="Ma J."/>
            <person name="Kohara Y."/>
            <person name="Sharp S."/>
            <person name="Simmonds M.N."/>
            <person name="Spiegler S."/>
            <person name="Tivey A."/>
            <person name="Sugano S."/>
            <person name="White B."/>
            <person name="Walker D."/>
            <person name="Woodward J.R."/>
            <person name="Winckler T."/>
            <person name="Tanaka Y."/>
            <person name="Shaulsky G."/>
            <person name="Schleicher M."/>
            <person name="Weinstock G.M."/>
            <person name="Rosenthal A."/>
            <person name="Cox E.C."/>
            <person name="Chisholm R.L."/>
            <person name="Gibbs R.A."/>
            <person name="Loomis W.F."/>
            <person name="Platzer M."/>
            <person name="Kay R.R."/>
            <person name="Williams J.G."/>
            <person name="Dear P.H."/>
            <person name="Noegel A.A."/>
            <person name="Barrell B.G."/>
            <person name="Kuspa A."/>
        </authorList>
    </citation>
    <scope>NUCLEOTIDE SEQUENCE [LARGE SCALE GENOMIC DNA]</scope>
    <source>
        <strain>AX4</strain>
    </source>
</reference>
<sequence>MVIKKLFILIFCLFLIINEINGKKTKINDIKKSKPKLSSTLLNVHIVAHTHDDVGWLKTVDEYYYGSNMSIAFAGVQYTLDTAITCLLANPERKFIYVEIAFFQRWWDEQSTTMQNIVKGLVESGQLEFINGGYCMNDEATTYYDDTIDQMTLGHQFLWENFGVMPKIGWHIDPFGHSATQARIFGQLGFDAFIIGRMDYQDIEARLENKQMEFMWRSTQSTPENQVFTSVLRAMYCTPDGFNFEQGDDPIQDDPNLFDNNVDSRAEQFTQVALEYATHYRTNNVLIPFGCDFAYLNAQMYYKNIDKLIAHINSNPDKYGLNLLYSTPSIYIDAVNDANLVWEVKTDDLFPYADNEFSYWTGYFVSRPALKGYVRQNNALLHVVEQMLVTSSNLMPSSRSEQLVDDIVIMREVMGIAQHHDAVSGTEQQHVADDYAERLSIGNCASLETINTVVGTLLTANGNSKSAAATPTISFCPLLNQSICPATDPLSSGTSVPVLIYNSLSWTRNEPVRIPIPIANVTVTSSSNGSITSQVNQINGTFILEFLATIPPLGYSTYIITSTASDFVEPNSIPAIIIQDEIIVSGGGKINEKVSYNDPIILENDYINVQFSSQDGSILSITNKTSGVTSSITQEYIWYNPSVGNDDSAQCSGAYIFRPVEDFAYPYNNATPSVSIIRGEISSSIRRFWSNEMVQTFRLYSNADHLEVEEIIGPIDISDGIGKEIVSRYTTTLVTDQTWYSDSQGMEMQKRITNYRPSWNLTVVQPTSGNYVPVNAIAYIQDPNQSLQFTIVTDRSRGCASLRDGQLDMMMHRRTLKDDGRGVGQPMNESTQIVTTSKLIFHDISSYAQSHYRPAALSLSHPLLPMFTTTQQSSNDWNSQYQGVYSPLTSASPLPNGLKIQTLQWLDNQDNTILLRIENIYQIDGQDSQDPQTITLDLSTIFSTITITSATEMNLTGVQKLSNLSRLKWKTVDGKNYDHKSSSSTKEDSSNGFVFTFSPMQIRTFIITTN</sequence>
<protein>
    <recommendedName>
        <fullName>Lysosomal alpha-mannosidase</fullName>
        <shortName>Laman</shortName>
        <ecNumber>3.2.1.24</ecNumber>
    </recommendedName>
    <alternativeName>
        <fullName>Alpha-D-mannoside mannohydrolase</fullName>
    </alternativeName>
    <alternativeName>
        <fullName>Alpha-mannosidase A</fullName>
    </alternativeName>
    <component>
        <recommendedName>
            <fullName>Alpha-mannosidase 60 kDa subunit</fullName>
        </recommendedName>
    </component>
    <component>
        <recommendedName>
            <fullName>Alpha-mannosidase 58 kDa subunit</fullName>
        </recommendedName>
    </component>
</protein>
<accession>P34098</accession>
<accession>Q54DI0</accession>
<keyword id="KW-0903">Direct protein sequencing</keyword>
<keyword id="KW-1015">Disulfide bond</keyword>
<keyword id="KW-0325">Glycoprotein</keyword>
<keyword id="KW-0326">Glycosidase</keyword>
<keyword id="KW-0378">Hydrolase</keyword>
<keyword id="KW-0458">Lysosome</keyword>
<keyword id="KW-0479">Metal-binding</keyword>
<keyword id="KW-1185">Reference proteome</keyword>
<keyword id="KW-0732">Signal</keyword>
<keyword id="KW-0862">Zinc</keyword>
<keyword id="KW-0865">Zymogen</keyword>
<dbReference type="EC" id="3.2.1.24"/>
<dbReference type="EMBL" id="M82822">
    <property type="protein sequence ID" value="AAA33224.1"/>
    <property type="status" value="ALT_FRAME"/>
    <property type="molecule type" value="Genomic_DNA"/>
</dbReference>
<dbReference type="EMBL" id="AAFI02000188">
    <property type="protein sequence ID" value="EAL61313.1"/>
    <property type="molecule type" value="Genomic_DNA"/>
</dbReference>
<dbReference type="PIR" id="A42265">
    <property type="entry name" value="A42265"/>
</dbReference>
<dbReference type="RefSeq" id="XP_629747.1">
    <property type="nucleotide sequence ID" value="XM_629745.1"/>
</dbReference>
<dbReference type="SMR" id="P34098"/>
<dbReference type="BioGRID" id="1253579">
    <property type="interactions" value="1"/>
</dbReference>
<dbReference type="FunCoup" id="P34098">
    <property type="interactions" value="36"/>
</dbReference>
<dbReference type="STRING" id="44689.P34098"/>
<dbReference type="CAZy" id="GH38">
    <property type="family name" value="Glycoside Hydrolase Family 38"/>
</dbReference>
<dbReference type="GlyCosmos" id="P34098">
    <property type="glycosylation" value="11 sites, No reported glycans"/>
</dbReference>
<dbReference type="GlyGen" id="P34098">
    <property type="glycosylation" value="13 sites"/>
</dbReference>
<dbReference type="PaxDb" id="44689-DDB0201569"/>
<dbReference type="EnsemblProtists" id="EAL61313">
    <property type="protein sequence ID" value="EAL61313"/>
    <property type="gene ID" value="DDB_G0292206"/>
</dbReference>
<dbReference type="GeneID" id="8628576"/>
<dbReference type="KEGG" id="ddi:DDB_G0292206"/>
<dbReference type="dictyBase" id="DDB_G0292206">
    <property type="gene designation" value="manA"/>
</dbReference>
<dbReference type="VEuPathDB" id="AmoebaDB:DDB_G0292206"/>
<dbReference type="eggNOG" id="KOG1959">
    <property type="taxonomic scope" value="Eukaryota"/>
</dbReference>
<dbReference type="HOGENOM" id="CLU_004690_2_0_1"/>
<dbReference type="InParanoid" id="P34098"/>
<dbReference type="OMA" id="FIWRPSK"/>
<dbReference type="PhylomeDB" id="P34098"/>
<dbReference type="Reactome" id="R-DDI-6798695">
    <property type="pathway name" value="Neutrophil degranulation"/>
</dbReference>
<dbReference type="Reactome" id="R-DDI-8853383">
    <property type="pathway name" value="Lysosomal oligosaccharide catabolism"/>
</dbReference>
<dbReference type="PRO" id="PR:P34098"/>
<dbReference type="Proteomes" id="UP000002195">
    <property type="component" value="Chromosome 6"/>
</dbReference>
<dbReference type="GO" id="GO:0032009">
    <property type="term" value="C:early phagosome"/>
    <property type="evidence" value="ECO:0000314"/>
    <property type="project" value="dictyBase"/>
</dbReference>
<dbReference type="GO" id="GO:0005764">
    <property type="term" value="C:lysosome"/>
    <property type="evidence" value="ECO:0000314"/>
    <property type="project" value="dictyBase"/>
</dbReference>
<dbReference type="GO" id="GO:0004559">
    <property type="term" value="F:alpha-mannosidase activity"/>
    <property type="evidence" value="ECO:0000314"/>
    <property type="project" value="dictyBase"/>
</dbReference>
<dbReference type="GO" id="GO:0030246">
    <property type="term" value="F:carbohydrate binding"/>
    <property type="evidence" value="ECO:0007669"/>
    <property type="project" value="InterPro"/>
</dbReference>
<dbReference type="GO" id="GO:0046872">
    <property type="term" value="F:metal ion binding"/>
    <property type="evidence" value="ECO:0007669"/>
    <property type="project" value="UniProtKB-KW"/>
</dbReference>
<dbReference type="GO" id="GO:0006013">
    <property type="term" value="P:mannose metabolic process"/>
    <property type="evidence" value="ECO:0007669"/>
    <property type="project" value="InterPro"/>
</dbReference>
<dbReference type="GO" id="GO:0036211">
    <property type="term" value="P:protein modification process"/>
    <property type="evidence" value="ECO:0000250"/>
    <property type="project" value="dictyBase"/>
</dbReference>
<dbReference type="GO" id="GO:0030587">
    <property type="term" value="P:sorocarp development"/>
    <property type="evidence" value="ECO:0007001"/>
    <property type="project" value="dictyBase"/>
</dbReference>
<dbReference type="CDD" id="cd10810">
    <property type="entry name" value="GH38N_AMII_LAM_like"/>
    <property type="match status" value="1"/>
</dbReference>
<dbReference type="FunFam" id="1.20.1270.50:FF:000002">
    <property type="entry name" value="Alpha-mannosidase"/>
    <property type="match status" value="1"/>
</dbReference>
<dbReference type="FunFam" id="1.20.1270.50:FF:000003">
    <property type="entry name" value="Alpha-mannosidase"/>
    <property type="match status" value="1"/>
</dbReference>
<dbReference type="FunFam" id="2.60.40.1180:FF:000082">
    <property type="entry name" value="Alpha-mannosidase"/>
    <property type="match status" value="1"/>
</dbReference>
<dbReference type="FunFam" id="3.20.110.10:FF:000001">
    <property type="entry name" value="Alpha-mannosidase"/>
    <property type="match status" value="1"/>
</dbReference>
<dbReference type="FunFam" id="2.60.40.1360:FF:000010">
    <property type="entry name" value="Lysosomal alpha-mannosidase"/>
    <property type="match status" value="1"/>
</dbReference>
<dbReference type="Gene3D" id="2.60.40.1360">
    <property type="match status" value="1"/>
</dbReference>
<dbReference type="Gene3D" id="3.20.110.10">
    <property type="entry name" value="Glycoside hydrolase 38, N terminal domain"/>
    <property type="match status" value="1"/>
</dbReference>
<dbReference type="Gene3D" id="1.20.1270.50">
    <property type="entry name" value="Glycoside hydrolase family 38, central domain"/>
    <property type="match status" value="2"/>
</dbReference>
<dbReference type="Gene3D" id="2.60.40.1180">
    <property type="entry name" value="Golgi alpha-mannosidase II"/>
    <property type="match status" value="1"/>
</dbReference>
<dbReference type="Gene3D" id="2.70.98.30">
    <property type="entry name" value="Golgi alpha-mannosidase II, domain 4"/>
    <property type="match status" value="1"/>
</dbReference>
<dbReference type="InterPro" id="IPR011013">
    <property type="entry name" value="Gal_mutarotase_sf_dom"/>
</dbReference>
<dbReference type="InterPro" id="IPR041147">
    <property type="entry name" value="GH38_C"/>
</dbReference>
<dbReference type="InterPro" id="IPR011330">
    <property type="entry name" value="Glyco_hydro/deAcase_b/a-brl"/>
</dbReference>
<dbReference type="InterPro" id="IPR011682">
    <property type="entry name" value="Glyco_hydro_38_C"/>
</dbReference>
<dbReference type="InterPro" id="IPR015341">
    <property type="entry name" value="Glyco_hydro_38_cen"/>
</dbReference>
<dbReference type="InterPro" id="IPR037094">
    <property type="entry name" value="Glyco_hydro_38_cen_sf"/>
</dbReference>
<dbReference type="InterPro" id="IPR000602">
    <property type="entry name" value="Glyco_hydro_38_N"/>
</dbReference>
<dbReference type="InterPro" id="IPR027291">
    <property type="entry name" value="Glyco_hydro_38_N_sf"/>
</dbReference>
<dbReference type="InterPro" id="IPR028995">
    <property type="entry name" value="Glyco_hydro_57/38_cen_sf"/>
</dbReference>
<dbReference type="InterPro" id="IPR013780">
    <property type="entry name" value="Glyco_hydro_b"/>
</dbReference>
<dbReference type="InterPro" id="IPR050843">
    <property type="entry name" value="Glycosyl_Hydrlase_38"/>
</dbReference>
<dbReference type="PANTHER" id="PTHR11607">
    <property type="entry name" value="ALPHA-MANNOSIDASE"/>
    <property type="match status" value="1"/>
</dbReference>
<dbReference type="PANTHER" id="PTHR11607:SF3">
    <property type="entry name" value="LYSOSOMAL ALPHA-MANNOSIDASE"/>
    <property type="match status" value="1"/>
</dbReference>
<dbReference type="Pfam" id="PF09261">
    <property type="entry name" value="Alpha-mann_mid"/>
    <property type="match status" value="1"/>
</dbReference>
<dbReference type="Pfam" id="PF17677">
    <property type="entry name" value="Glyco_hydro38C2"/>
    <property type="match status" value="1"/>
</dbReference>
<dbReference type="Pfam" id="PF07748">
    <property type="entry name" value="Glyco_hydro_38C"/>
    <property type="match status" value="1"/>
</dbReference>
<dbReference type="Pfam" id="PF01074">
    <property type="entry name" value="Glyco_hydro_38N"/>
    <property type="match status" value="1"/>
</dbReference>
<dbReference type="SMART" id="SM00872">
    <property type="entry name" value="Alpha-mann_mid"/>
    <property type="match status" value="1"/>
</dbReference>
<dbReference type="SUPFAM" id="SSF88688">
    <property type="entry name" value="Families 57/38 glycoside transferase middle domain"/>
    <property type="match status" value="1"/>
</dbReference>
<dbReference type="SUPFAM" id="SSF74650">
    <property type="entry name" value="Galactose mutarotase-like"/>
    <property type="match status" value="1"/>
</dbReference>
<dbReference type="SUPFAM" id="SSF88713">
    <property type="entry name" value="Glycoside hydrolase/deacetylase"/>
    <property type="match status" value="1"/>
</dbReference>
<name>MANA_DICDI</name>
<organism>
    <name type="scientific">Dictyostelium discoideum</name>
    <name type="common">Social amoeba</name>
    <dbReference type="NCBI Taxonomy" id="44689"/>
    <lineage>
        <taxon>Eukaryota</taxon>
        <taxon>Amoebozoa</taxon>
        <taxon>Evosea</taxon>
        <taxon>Eumycetozoa</taxon>
        <taxon>Dictyostelia</taxon>
        <taxon>Dictyosteliales</taxon>
        <taxon>Dictyosteliaceae</taxon>
        <taxon>Dictyostelium</taxon>
    </lineage>
</organism>
<feature type="signal peptide" evidence="2">
    <location>
        <begin position="1"/>
        <end position="22"/>
    </location>
</feature>
<feature type="propeptide" id="PRO_0000012081" description="Pro I" evidence="2">
    <location>
        <begin position="23"/>
        <end position="40"/>
    </location>
</feature>
<feature type="chain" id="PRO_0000012082" description="Alpha-mannosidase 60 kDa subunit">
    <location>
        <begin position="41"/>
        <end position="507"/>
    </location>
</feature>
<feature type="propeptide" id="PRO_0000012083" description="Pro II" evidence="2">
    <location>
        <begin position="508"/>
        <end position="595"/>
    </location>
</feature>
<feature type="chain" id="PRO_0000012084" description="Alpha-mannosidase 58 kDa subunit">
    <location>
        <begin position="596"/>
        <end position="1010"/>
    </location>
</feature>
<feature type="active site" description="Nucleophile" evidence="1">
    <location>
        <position position="173"/>
    </location>
</feature>
<feature type="binding site" evidence="1">
    <location>
        <position position="51"/>
    </location>
    <ligand>
        <name>Zn(2+)</name>
        <dbReference type="ChEBI" id="CHEBI:29105"/>
    </ligand>
</feature>
<feature type="binding site" evidence="1">
    <location>
        <position position="53"/>
    </location>
    <ligand>
        <name>Zn(2+)</name>
        <dbReference type="ChEBI" id="CHEBI:29105"/>
    </ligand>
</feature>
<feature type="binding site" evidence="1">
    <location>
        <position position="173"/>
    </location>
    <ligand>
        <name>Zn(2+)</name>
        <dbReference type="ChEBI" id="CHEBI:29105"/>
    </ligand>
</feature>
<feature type="binding site" evidence="1">
    <location>
        <position position="420"/>
    </location>
    <ligand>
        <name>Zn(2+)</name>
        <dbReference type="ChEBI" id="CHEBI:29105"/>
    </ligand>
</feature>
<feature type="site" description="Cleavage; to produce 60 kDa subunit" evidence="2">
    <location>
        <begin position="507"/>
        <end position="508"/>
    </location>
</feature>
<feature type="site" description="Cleavage; to produce 58 and 82 kDa subunits; alternate" evidence="3">
    <location>
        <begin position="589"/>
        <end position="590"/>
    </location>
</feature>
<feature type="site" description="Cleavage; to produce 58 and 82 kDa subunits; alternate" evidence="3">
    <location>
        <begin position="593"/>
        <end position="594"/>
    </location>
</feature>
<feature type="glycosylation site" description="N-linked (GlcNAc...) asparagine" evidence="2">
    <location>
        <position position="68"/>
    </location>
</feature>
<feature type="glycosylation site" description="N-linked (GlcNAc...) asparagine" evidence="2">
    <location>
        <position position="480"/>
    </location>
</feature>
<feature type="glycosylation site" description="N-linked (GlcNAc...) asparagine" evidence="2">
    <location>
        <position position="520"/>
    </location>
</feature>
<feature type="glycosylation site" description="N-linked (GlcNAc...) asparagine" evidence="2">
    <location>
        <position position="528"/>
    </location>
</feature>
<feature type="glycosylation site" description="N-linked (GlcNAc...) asparagine" evidence="2">
    <location>
        <position position="539"/>
    </location>
</feature>
<feature type="glycosylation site" description="N-linked (GlcNAc...) asparagine" evidence="2">
    <location>
        <position position="623"/>
    </location>
</feature>
<feature type="glycosylation site" description="N-linked (GlcNAc...) asparagine" evidence="2">
    <location>
        <position position="760"/>
    </location>
</feature>
<feature type="glycosylation site" description="N-linked (GlcNAc...) asparagine" evidence="2">
    <location>
        <position position="784"/>
    </location>
</feature>
<feature type="glycosylation site" description="N-linked (GlcNAc...) asparagine" evidence="2">
    <location>
        <position position="828"/>
    </location>
</feature>
<feature type="glycosylation site" description="N-linked (GlcNAc...) asparagine" evidence="2">
    <location>
        <position position="954"/>
    </location>
</feature>
<feature type="glycosylation site" description="N-linked (GlcNAc...) asparagine" evidence="2">
    <location>
        <position position="963"/>
    </location>
</feature>
<feature type="sequence conflict" description="In Ref. 1; AAA33224." evidence="3" ref="1">
    <original>IP</original>
    <variation>TL</variation>
    <location>
        <begin position="514"/>
        <end position="515"/>
    </location>
</feature>
<feature type="sequence conflict" description="In Ref. 1; AAA33224." evidence="3" ref="1">
    <original>D</original>
    <variation>Y</variation>
    <location>
        <position position="978"/>
    </location>
</feature>
<evidence type="ECO:0000250" key="1"/>
<evidence type="ECO:0000255" key="2"/>
<evidence type="ECO:0000305" key="3"/>